<gene>
    <name type="primary">Cp36</name>
    <name type="synonym">S36</name>
</gene>
<sequence length="293" mass="30941">MQLGLWFGLFAVAAAPLVSANYGSPGRGAGRQIQYLPGGPSEGLEEYVNAATGGSQPSANQLTAQAEIQIVGEARRLGRVQAQLQALNNNPTYQKLKNSEDIAESLAETNLASNIRQGKINVVSPQFVDQHLFRSLLVPSGHNNHQVIATQPLPPIIVHQPGAPPAHVNSGPPTVVRGNPVIYKIKPSVIYQQEVINKVPTPLSLNPVYVKVYKPGKKIEAPLAPVVAPVYSQPQSYGQPQAYNQPQAYSQPQSYGNSGSSGAGNSGPSSDSYAAGAETPLYASPAPYGSPSY</sequence>
<proteinExistence type="inferred from homology"/>
<dbReference type="EMBL" id="X51343">
    <property type="protein sequence ID" value="CAA35724.1"/>
    <property type="molecule type" value="Genomic_DNA"/>
</dbReference>
<dbReference type="PIR" id="S09209">
    <property type="entry name" value="S09209"/>
</dbReference>
<dbReference type="eggNOG" id="ENOG502T6KI">
    <property type="taxonomic scope" value="Eukaryota"/>
</dbReference>
<dbReference type="OrthoDB" id="8056482at2759"/>
<dbReference type="GO" id="GO:0042600">
    <property type="term" value="C:egg chorion"/>
    <property type="evidence" value="ECO:0007669"/>
    <property type="project" value="EnsemblMetazoa"/>
</dbReference>
<dbReference type="GO" id="GO:0005576">
    <property type="term" value="C:extracellular region"/>
    <property type="evidence" value="ECO:0007669"/>
    <property type="project" value="UniProtKB-SubCell"/>
</dbReference>
<dbReference type="GO" id="GO:0005213">
    <property type="term" value="F:structural constituent of egg chorion"/>
    <property type="evidence" value="ECO:0007669"/>
    <property type="project" value="EnsemblMetazoa"/>
</dbReference>
<dbReference type="GO" id="GO:0007304">
    <property type="term" value="P:chorion-containing eggshell formation"/>
    <property type="evidence" value="ECO:0007669"/>
    <property type="project" value="EnsemblMetazoa"/>
</dbReference>
<dbReference type="GO" id="GO:0007306">
    <property type="term" value="P:egg chorion assembly"/>
    <property type="evidence" value="ECO:0007669"/>
    <property type="project" value="EnsemblMetazoa"/>
</dbReference>
<dbReference type="InterPro" id="IPR008449">
    <property type="entry name" value="Chorion_S36/S28"/>
</dbReference>
<dbReference type="Pfam" id="PF05387">
    <property type="entry name" value="Chorion_3"/>
    <property type="match status" value="1"/>
</dbReference>
<reference key="1">
    <citation type="journal article" date="1990" name="Nucleic Acids Res.">
        <title>The chorion genes of the medfly, Ceratitis capitata, I: structural and regulatory conservation of the s36 gene relative to two Drosophila species.</title>
        <authorList>
            <person name="Konsolaki M."/>
            <person name="Komitopoulou K."/>
            <person name="Tolias P.P."/>
            <person name="King D.L."/>
            <person name="Swimmer C."/>
            <person name="Kafatos F.C."/>
        </authorList>
    </citation>
    <scope>NUCLEOTIDE SEQUENCE [GENOMIC DNA]</scope>
</reference>
<feature type="signal peptide" evidence="2">
    <location>
        <begin position="1"/>
        <end position="20"/>
    </location>
</feature>
<feature type="chain" id="PRO_0000089630" description="Chorion protein S36">
    <location>
        <begin position="21"/>
        <end position="293"/>
    </location>
</feature>
<feature type="region of interest" description="Disordered" evidence="3">
    <location>
        <begin position="235"/>
        <end position="293"/>
    </location>
</feature>
<feature type="compositionally biased region" description="Polar residues" evidence="3">
    <location>
        <begin position="235"/>
        <end position="253"/>
    </location>
</feature>
<protein>
    <recommendedName>
        <fullName>Chorion protein S36</fullName>
    </recommendedName>
</protein>
<keyword id="KW-0964">Secreted</keyword>
<keyword id="KW-0732">Signal</keyword>
<organism>
    <name type="scientific">Drosophila virilis</name>
    <name type="common">Fruit fly</name>
    <dbReference type="NCBI Taxonomy" id="7244"/>
    <lineage>
        <taxon>Eukaryota</taxon>
        <taxon>Metazoa</taxon>
        <taxon>Ecdysozoa</taxon>
        <taxon>Arthropoda</taxon>
        <taxon>Hexapoda</taxon>
        <taxon>Insecta</taxon>
        <taxon>Pterygota</taxon>
        <taxon>Neoptera</taxon>
        <taxon>Endopterygota</taxon>
        <taxon>Diptera</taxon>
        <taxon>Brachycera</taxon>
        <taxon>Muscomorpha</taxon>
        <taxon>Ephydroidea</taxon>
        <taxon>Drosophilidae</taxon>
        <taxon>Drosophila</taxon>
    </lineage>
</organism>
<evidence type="ECO:0000250" key="1"/>
<evidence type="ECO:0000255" key="2"/>
<evidence type="ECO:0000256" key="3">
    <source>
        <dbReference type="SAM" id="MobiDB-lite"/>
    </source>
</evidence>
<evidence type="ECO:0000305" key="4"/>
<comment type="function">
    <text evidence="1">Chorion membrane (egg shell) protein; protects the egg from the environment.</text>
</comment>
<comment type="subcellular location">
    <subcellularLocation>
        <location evidence="1">Secreted</location>
    </subcellularLocation>
</comment>
<comment type="similarity">
    <text evidence="4">Belongs to the chorion protein S36 family.</text>
</comment>
<accession>P17111</accession>
<name>CH36_DROVI</name>